<keyword id="KW-0963">Cytoplasm</keyword>
<keyword id="KW-0690">Ribosome biogenesis</keyword>
<feature type="chain" id="PRO_1000000180" description="Ribosome-binding factor A">
    <location>
        <begin position="1"/>
        <end position="138"/>
    </location>
</feature>
<feature type="region of interest" description="Disordered" evidence="2">
    <location>
        <begin position="117"/>
        <end position="138"/>
    </location>
</feature>
<reference key="1">
    <citation type="journal article" date="2005" name="Proc. Natl. Acad. Sci. U.S.A.">
        <title>Comparison of the complete genome sequences of Pseudomonas syringae pv. syringae B728a and pv. tomato DC3000.</title>
        <authorList>
            <person name="Feil H."/>
            <person name="Feil W.S."/>
            <person name="Chain P."/>
            <person name="Larimer F."/>
            <person name="Dibartolo G."/>
            <person name="Copeland A."/>
            <person name="Lykidis A."/>
            <person name="Trong S."/>
            <person name="Nolan M."/>
            <person name="Goltsman E."/>
            <person name="Thiel J."/>
            <person name="Malfatti S."/>
            <person name="Loper J.E."/>
            <person name="Lapidus A."/>
            <person name="Detter J.C."/>
            <person name="Land M."/>
            <person name="Richardson P.M."/>
            <person name="Kyrpides N.C."/>
            <person name="Ivanova N."/>
            <person name="Lindow S.E."/>
        </authorList>
    </citation>
    <scope>NUCLEOTIDE SEQUENCE [LARGE SCALE GENOMIC DNA]</scope>
    <source>
        <strain>B728a</strain>
    </source>
</reference>
<evidence type="ECO:0000255" key="1">
    <source>
        <dbReference type="HAMAP-Rule" id="MF_00003"/>
    </source>
</evidence>
<evidence type="ECO:0000256" key="2">
    <source>
        <dbReference type="SAM" id="MobiDB-lite"/>
    </source>
</evidence>
<comment type="function">
    <text evidence="1">One of several proteins that assist in the late maturation steps of the functional core of the 30S ribosomal subunit. Associates with free 30S ribosomal subunits (but not with 30S subunits that are part of 70S ribosomes or polysomes). Required for efficient processing of 16S rRNA. May interact with the 5'-terminal helix region of 16S rRNA.</text>
</comment>
<comment type="subunit">
    <text evidence="1">Monomer. Binds 30S ribosomal subunits, but not 50S ribosomal subunits or 70S ribosomes.</text>
</comment>
<comment type="subcellular location">
    <subcellularLocation>
        <location evidence="1">Cytoplasm</location>
    </subcellularLocation>
</comment>
<comment type="similarity">
    <text evidence="1">Belongs to the RbfA family.</text>
</comment>
<proteinExistence type="inferred from homology"/>
<name>RBFA_PSEU2</name>
<protein>
    <recommendedName>
        <fullName evidence="1">Ribosome-binding factor A</fullName>
    </recommendedName>
</protein>
<sequence length="138" mass="15396">MAKEYSRTQRIGDQMQRELAQLIRREIKDPRVGLVTITAVDVSRDVGHAKIFMTVMGQDSAEEIAQTIKVLNSAAGFLRMQLAREMKLRSVPQLHFHYDESVVRGAHLSALIERAVAEDGQHQEGPASADAKPESTEE</sequence>
<accession>Q4ZNR3</accession>
<dbReference type="EMBL" id="CP000075">
    <property type="protein sequence ID" value="AAY39209.1"/>
    <property type="molecule type" value="Genomic_DNA"/>
</dbReference>
<dbReference type="RefSeq" id="WP_011268880.1">
    <property type="nucleotide sequence ID" value="NC_007005.1"/>
</dbReference>
<dbReference type="RefSeq" id="YP_237247.1">
    <property type="nucleotide sequence ID" value="NC_007005.1"/>
</dbReference>
<dbReference type="SMR" id="Q4ZNR3"/>
<dbReference type="STRING" id="205918.Psyr_4179"/>
<dbReference type="KEGG" id="psb:Psyr_4179"/>
<dbReference type="PATRIC" id="fig|205918.7.peg.4306"/>
<dbReference type="eggNOG" id="COG0858">
    <property type="taxonomic scope" value="Bacteria"/>
</dbReference>
<dbReference type="HOGENOM" id="CLU_089475_5_0_6"/>
<dbReference type="OrthoDB" id="307788at2"/>
<dbReference type="Proteomes" id="UP000000426">
    <property type="component" value="Chromosome"/>
</dbReference>
<dbReference type="GO" id="GO:0005829">
    <property type="term" value="C:cytosol"/>
    <property type="evidence" value="ECO:0007669"/>
    <property type="project" value="TreeGrafter"/>
</dbReference>
<dbReference type="GO" id="GO:0043024">
    <property type="term" value="F:ribosomal small subunit binding"/>
    <property type="evidence" value="ECO:0007669"/>
    <property type="project" value="TreeGrafter"/>
</dbReference>
<dbReference type="GO" id="GO:0030490">
    <property type="term" value="P:maturation of SSU-rRNA"/>
    <property type="evidence" value="ECO:0007669"/>
    <property type="project" value="UniProtKB-UniRule"/>
</dbReference>
<dbReference type="Gene3D" id="3.30.300.20">
    <property type="match status" value="1"/>
</dbReference>
<dbReference type="HAMAP" id="MF_00003">
    <property type="entry name" value="RbfA"/>
    <property type="match status" value="1"/>
</dbReference>
<dbReference type="InterPro" id="IPR015946">
    <property type="entry name" value="KH_dom-like_a/b"/>
</dbReference>
<dbReference type="InterPro" id="IPR000238">
    <property type="entry name" value="RbfA"/>
</dbReference>
<dbReference type="InterPro" id="IPR023799">
    <property type="entry name" value="RbfA_dom_sf"/>
</dbReference>
<dbReference type="InterPro" id="IPR020053">
    <property type="entry name" value="Ribosome-bd_factorA_CS"/>
</dbReference>
<dbReference type="NCBIfam" id="TIGR00082">
    <property type="entry name" value="rbfA"/>
    <property type="match status" value="1"/>
</dbReference>
<dbReference type="PANTHER" id="PTHR33515">
    <property type="entry name" value="RIBOSOME-BINDING FACTOR A, CHLOROPLASTIC-RELATED"/>
    <property type="match status" value="1"/>
</dbReference>
<dbReference type="PANTHER" id="PTHR33515:SF1">
    <property type="entry name" value="RIBOSOME-BINDING FACTOR A, CHLOROPLASTIC-RELATED"/>
    <property type="match status" value="1"/>
</dbReference>
<dbReference type="Pfam" id="PF02033">
    <property type="entry name" value="RBFA"/>
    <property type="match status" value="1"/>
</dbReference>
<dbReference type="SUPFAM" id="SSF89919">
    <property type="entry name" value="Ribosome-binding factor A, RbfA"/>
    <property type="match status" value="1"/>
</dbReference>
<dbReference type="PROSITE" id="PS01319">
    <property type="entry name" value="RBFA"/>
    <property type="match status" value="1"/>
</dbReference>
<gene>
    <name evidence="1" type="primary">rbfA</name>
    <name type="ordered locus">Psyr_4179</name>
</gene>
<organism>
    <name type="scientific">Pseudomonas syringae pv. syringae (strain B728a)</name>
    <dbReference type="NCBI Taxonomy" id="205918"/>
    <lineage>
        <taxon>Bacteria</taxon>
        <taxon>Pseudomonadati</taxon>
        <taxon>Pseudomonadota</taxon>
        <taxon>Gammaproteobacteria</taxon>
        <taxon>Pseudomonadales</taxon>
        <taxon>Pseudomonadaceae</taxon>
        <taxon>Pseudomonas</taxon>
        <taxon>Pseudomonas syringae</taxon>
    </lineage>
</organism>